<evidence type="ECO:0000255" key="1">
    <source>
        <dbReference type="HAMAP-Rule" id="MF_01382"/>
    </source>
</evidence>
<organism>
    <name type="scientific">Mycoplasmopsis pulmonis (strain UAB CTIP)</name>
    <name type="common">Mycoplasma pulmonis</name>
    <dbReference type="NCBI Taxonomy" id="272635"/>
    <lineage>
        <taxon>Bacteria</taxon>
        <taxon>Bacillati</taxon>
        <taxon>Mycoplasmatota</taxon>
        <taxon>Mycoplasmoidales</taxon>
        <taxon>Metamycoplasmataceae</taxon>
        <taxon>Mycoplasmopsis</taxon>
    </lineage>
</organism>
<sequence length="867" mass="99775">MIKKLKEIPFFKSTEMKIAEKTLQQINDLEPSVVNLTDEELQNKTDEFVRRIQEGETLEHIRPEVFAVSREATKRVLKKRPYDVQMLGGIILDLGSVAEMRTGEGKTITSIAPVYLNALEKKGVIVSTVNEYLAERDAAEMGEVFSFLKMTVGVNKPSMSPEEKKQIYQCDITYSIHSELGFDYLRDNMVTNINDKVQRGLNYILLDEVDSILIDEARTPLIISGGESSSSYMYEVANQFARTLQPGDYEIDEESKTIKLVDSGIDKANKFFTLSNLYDIKNSELVHRIQNALRANFIMKKDVEYIVKDEKIELIDAFTGRIMEGRAYSEGLQQAIQAKEFLEIESETKTLATITYQNFFRMFKKLSGMTGTAKTEEQEFIDIYNMRVNPIPTNLPNIRVDDEDSIYWGTRQKLNAILKEVKQVSKTGQPILIGTSQIEQSEQLHQLFDQNGIVHTVLNAKQNEQEANIISQAGQLNAITIATNMAGRGTDIKPSKEALAVGGLYVLGTDKSESRRIDNQLRGRSGRQGDIGYSKFFLSLDDQLILRFAGADKLKEIFPKSEEALNSKQLKRHFSNAQKKIEGFNYDSRKTVLNYDDVIRQQRELMYSQRDLILVSEDLLFVIERMVFRSVDDVLKNSMFLLKNGGFDYTKLTEYINDQWLKPFDFKFEESKLSHLHEKDLAEYIFQNLMEQYMIVRQRLIDSFGEDSILYHERSILISTIDSYWQNHINSMDKLRSNSNMVQYAQKNPYQVYTQKGSKKFERLIVEIALQSSVKLFNNPSAYRQDQMEEVMIEGYTQEFIDKIPESEREYFKTLPQDLKSKIVKNLIQLEQSIAMVESNDQSQDLQSITIDILPDQNLNNSSDEAK</sequence>
<accession>Q98RA6</accession>
<proteinExistence type="inferred from homology"/>
<feature type="chain" id="PRO_0000320859" description="Protein translocase subunit SecA">
    <location>
        <begin position="1"/>
        <end position="867"/>
    </location>
</feature>
<feature type="binding site" evidence="1">
    <location>
        <position position="85"/>
    </location>
    <ligand>
        <name>ATP</name>
        <dbReference type="ChEBI" id="CHEBI:30616"/>
    </ligand>
</feature>
<feature type="binding site" evidence="1">
    <location>
        <begin position="103"/>
        <end position="107"/>
    </location>
    <ligand>
        <name>ATP</name>
        <dbReference type="ChEBI" id="CHEBI:30616"/>
    </ligand>
</feature>
<feature type="binding site" evidence="1">
    <location>
        <position position="491"/>
    </location>
    <ligand>
        <name>ATP</name>
        <dbReference type="ChEBI" id="CHEBI:30616"/>
    </ligand>
</feature>
<protein>
    <recommendedName>
        <fullName evidence="1">Protein translocase subunit SecA</fullName>
        <ecNumber evidence="1">7.4.2.8</ecNumber>
    </recommendedName>
</protein>
<dbReference type="EC" id="7.4.2.8" evidence="1"/>
<dbReference type="EMBL" id="AL445563">
    <property type="protein sequence ID" value="CAC13277.1"/>
    <property type="molecule type" value="Genomic_DNA"/>
</dbReference>
<dbReference type="PIR" id="H90524">
    <property type="entry name" value="H90524"/>
</dbReference>
<dbReference type="RefSeq" id="WP_010924908.1">
    <property type="nucleotide sequence ID" value="NC_002771.1"/>
</dbReference>
<dbReference type="SMR" id="Q98RA6"/>
<dbReference type="STRING" id="272635.gene:17576685"/>
<dbReference type="KEGG" id="mpu:MYPU_1040"/>
<dbReference type="eggNOG" id="COG0653">
    <property type="taxonomic scope" value="Bacteria"/>
</dbReference>
<dbReference type="HOGENOM" id="CLU_005314_3_0_14"/>
<dbReference type="BioCyc" id="MPUL272635:G1GT6-103-MONOMER"/>
<dbReference type="Proteomes" id="UP000000528">
    <property type="component" value="Chromosome"/>
</dbReference>
<dbReference type="GO" id="GO:0031522">
    <property type="term" value="C:cell envelope Sec protein transport complex"/>
    <property type="evidence" value="ECO:0007669"/>
    <property type="project" value="TreeGrafter"/>
</dbReference>
<dbReference type="GO" id="GO:0005829">
    <property type="term" value="C:cytosol"/>
    <property type="evidence" value="ECO:0007669"/>
    <property type="project" value="TreeGrafter"/>
</dbReference>
<dbReference type="GO" id="GO:0005886">
    <property type="term" value="C:plasma membrane"/>
    <property type="evidence" value="ECO:0007669"/>
    <property type="project" value="UniProtKB-SubCell"/>
</dbReference>
<dbReference type="GO" id="GO:0005524">
    <property type="term" value="F:ATP binding"/>
    <property type="evidence" value="ECO:0007669"/>
    <property type="project" value="UniProtKB-UniRule"/>
</dbReference>
<dbReference type="GO" id="GO:0008564">
    <property type="term" value="F:protein-exporting ATPase activity"/>
    <property type="evidence" value="ECO:0007669"/>
    <property type="project" value="UniProtKB-EC"/>
</dbReference>
<dbReference type="GO" id="GO:0065002">
    <property type="term" value="P:intracellular protein transmembrane transport"/>
    <property type="evidence" value="ECO:0007669"/>
    <property type="project" value="UniProtKB-UniRule"/>
</dbReference>
<dbReference type="GO" id="GO:0017038">
    <property type="term" value="P:protein import"/>
    <property type="evidence" value="ECO:0007669"/>
    <property type="project" value="InterPro"/>
</dbReference>
<dbReference type="GO" id="GO:0006605">
    <property type="term" value="P:protein targeting"/>
    <property type="evidence" value="ECO:0007669"/>
    <property type="project" value="UniProtKB-UniRule"/>
</dbReference>
<dbReference type="GO" id="GO:0043952">
    <property type="term" value="P:protein transport by the Sec complex"/>
    <property type="evidence" value="ECO:0007669"/>
    <property type="project" value="TreeGrafter"/>
</dbReference>
<dbReference type="CDD" id="cd17928">
    <property type="entry name" value="DEXDc_SecA"/>
    <property type="match status" value="1"/>
</dbReference>
<dbReference type="CDD" id="cd18803">
    <property type="entry name" value="SF2_C_secA"/>
    <property type="match status" value="1"/>
</dbReference>
<dbReference type="FunFam" id="3.40.50.300:FF:000429">
    <property type="entry name" value="Preprotein translocase subunit SecA"/>
    <property type="match status" value="1"/>
</dbReference>
<dbReference type="Gene3D" id="1.10.3060.10">
    <property type="entry name" value="Helical scaffold and wing domains of SecA"/>
    <property type="match status" value="1"/>
</dbReference>
<dbReference type="Gene3D" id="3.40.50.300">
    <property type="entry name" value="P-loop containing nucleotide triphosphate hydrolases"/>
    <property type="match status" value="3"/>
</dbReference>
<dbReference type="Gene3D" id="3.90.1440.10">
    <property type="entry name" value="SecA, preprotein cross-linking domain"/>
    <property type="match status" value="1"/>
</dbReference>
<dbReference type="HAMAP" id="MF_01382">
    <property type="entry name" value="SecA"/>
    <property type="match status" value="1"/>
</dbReference>
<dbReference type="InterPro" id="IPR014001">
    <property type="entry name" value="Helicase_ATP-bd"/>
</dbReference>
<dbReference type="InterPro" id="IPR001650">
    <property type="entry name" value="Helicase_C-like"/>
</dbReference>
<dbReference type="InterPro" id="IPR027417">
    <property type="entry name" value="P-loop_NTPase"/>
</dbReference>
<dbReference type="InterPro" id="IPR000185">
    <property type="entry name" value="SecA"/>
</dbReference>
<dbReference type="InterPro" id="IPR011115">
    <property type="entry name" value="SecA_DEAD"/>
</dbReference>
<dbReference type="InterPro" id="IPR014018">
    <property type="entry name" value="SecA_motor_DEAD"/>
</dbReference>
<dbReference type="InterPro" id="IPR011130">
    <property type="entry name" value="SecA_preprotein_X-link_dom"/>
</dbReference>
<dbReference type="InterPro" id="IPR044722">
    <property type="entry name" value="SecA_SF2_C"/>
</dbReference>
<dbReference type="InterPro" id="IPR011116">
    <property type="entry name" value="SecA_Wing/Scaffold"/>
</dbReference>
<dbReference type="InterPro" id="IPR036266">
    <property type="entry name" value="SecA_Wing/Scaffold_sf"/>
</dbReference>
<dbReference type="InterPro" id="IPR036670">
    <property type="entry name" value="SecA_X-link_sf"/>
</dbReference>
<dbReference type="NCBIfam" id="NF006630">
    <property type="entry name" value="PRK09200.1"/>
    <property type="match status" value="1"/>
</dbReference>
<dbReference type="NCBIfam" id="TIGR00963">
    <property type="entry name" value="secA"/>
    <property type="match status" value="1"/>
</dbReference>
<dbReference type="PANTHER" id="PTHR30612:SF0">
    <property type="entry name" value="CHLOROPLAST PROTEIN-TRANSPORTING ATPASE"/>
    <property type="match status" value="1"/>
</dbReference>
<dbReference type="PANTHER" id="PTHR30612">
    <property type="entry name" value="SECA INNER MEMBRANE COMPONENT OF SEC PROTEIN SECRETION SYSTEM"/>
    <property type="match status" value="1"/>
</dbReference>
<dbReference type="Pfam" id="PF21090">
    <property type="entry name" value="P-loop_SecA"/>
    <property type="match status" value="2"/>
</dbReference>
<dbReference type="Pfam" id="PF07517">
    <property type="entry name" value="SecA_DEAD"/>
    <property type="match status" value="1"/>
</dbReference>
<dbReference type="Pfam" id="PF01043">
    <property type="entry name" value="SecA_PP_bind"/>
    <property type="match status" value="1"/>
</dbReference>
<dbReference type="Pfam" id="PF07516">
    <property type="entry name" value="SecA_SW"/>
    <property type="match status" value="1"/>
</dbReference>
<dbReference type="PRINTS" id="PR00906">
    <property type="entry name" value="SECA"/>
</dbReference>
<dbReference type="SMART" id="SM00957">
    <property type="entry name" value="SecA_DEAD"/>
    <property type="match status" value="1"/>
</dbReference>
<dbReference type="SMART" id="SM00958">
    <property type="entry name" value="SecA_PP_bind"/>
    <property type="match status" value="1"/>
</dbReference>
<dbReference type="SUPFAM" id="SSF81886">
    <property type="entry name" value="Helical scaffold and wing domains of SecA"/>
    <property type="match status" value="1"/>
</dbReference>
<dbReference type="SUPFAM" id="SSF52540">
    <property type="entry name" value="P-loop containing nucleoside triphosphate hydrolases"/>
    <property type="match status" value="2"/>
</dbReference>
<dbReference type="SUPFAM" id="SSF81767">
    <property type="entry name" value="Pre-protein crosslinking domain of SecA"/>
    <property type="match status" value="1"/>
</dbReference>
<dbReference type="PROSITE" id="PS51196">
    <property type="entry name" value="SECA_MOTOR_DEAD"/>
    <property type="match status" value="1"/>
</dbReference>
<name>SECA_MYCPU</name>
<comment type="function">
    <text evidence="1">Part of the Sec protein translocase complex. Interacts with the SecYEG preprotein conducting channel. Has a central role in coupling the hydrolysis of ATP to the transfer of proteins into and across the cell membrane, serving as an ATP-driven molecular motor driving the stepwise translocation of polypeptide chains across the membrane.</text>
</comment>
<comment type="catalytic activity">
    <reaction evidence="1">
        <text>ATP + H2O + cellular proteinSide 1 = ADP + phosphate + cellular proteinSide 2.</text>
        <dbReference type="EC" id="7.4.2.8"/>
    </reaction>
</comment>
<comment type="subunit">
    <text evidence="1">Monomer and homodimer. Part of the essential Sec protein translocation apparatus which comprises SecA, SecYEG and auxiliary proteins SecDF. Other proteins may also be involved.</text>
</comment>
<comment type="subcellular location">
    <subcellularLocation>
        <location evidence="1">Cell membrane</location>
        <topology evidence="1">Peripheral membrane protein</topology>
        <orientation evidence="1">Cytoplasmic side</orientation>
    </subcellularLocation>
    <subcellularLocation>
        <location evidence="1">Cytoplasm</location>
    </subcellularLocation>
    <text evidence="1">Distribution is 50-50.</text>
</comment>
<comment type="similarity">
    <text evidence="1">Belongs to the SecA family.</text>
</comment>
<reference key="1">
    <citation type="journal article" date="2001" name="Nucleic Acids Res.">
        <title>The complete genome sequence of the murine respiratory pathogen Mycoplasma pulmonis.</title>
        <authorList>
            <person name="Chambaud I."/>
            <person name="Heilig R."/>
            <person name="Ferris S."/>
            <person name="Barbe V."/>
            <person name="Samson D."/>
            <person name="Galisson F."/>
            <person name="Moszer I."/>
            <person name="Dybvig K."/>
            <person name="Wroblewski H."/>
            <person name="Viari A."/>
            <person name="Rocha E.P.C."/>
            <person name="Blanchard A."/>
        </authorList>
    </citation>
    <scope>NUCLEOTIDE SEQUENCE [LARGE SCALE GENOMIC DNA]</scope>
    <source>
        <strain>UAB CTIP</strain>
    </source>
</reference>
<gene>
    <name evidence="1" type="primary">secA</name>
    <name type="ordered locus">MYPU_1040</name>
</gene>
<keyword id="KW-0067">ATP-binding</keyword>
<keyword id="KW-1003">Cell membrane</keyword>
<keyword id="KW-0963">Cytoplasm</keyword>
<keyword id="KW-0472">Membrane</keyword>
<keyword id="KW-0547">Nucleotide-binding</keyword>
<keyword id="KW-0653">Protein transport</keyword>
<keyword id="KW-1185">Reference proteome</keyword>
<keyword id="KW-1278">Translocase</keyword>
<keyword id="KW-0811">Translocation</keyword>
<keyword id="KW-0813">Transport</keyword>